<comment type="function">
    <text evidence="1">Catalyzes the condensation of pantoate with beta-alanine in an ATP-dependent reaction via a pantoyl-adenylate intermediate.</text>
</comment>
<comment type="catalytic activity">
    <reaction evidence="1">
        <text>(R)-pantoate + beta-alanine + ATP = (R)-pantothenate + AMP + diphosphate + H(+)</text>
        <dbReference type="Rhea" id="RHEA:10912"/>
        <dbReference type="ChEBI" id="CHEBI:15378"/>
        <dbReference type="ChEBI" id="CHEBI:15980"/>
        <dbReference type="ChEBI" id="CHEBI:29032"/>
        <dbReference type="ChEBI" id="CHEBI:30616"/>
        <dbReference type="ChEBI" id="CHEBI:33019"/>
        <dbReference type="ChEBI" id="CHEBI:57966"/>
        <dbReference type="ChEBI" id="CHEBI:456215"/>
        <dbReference type="EC" id="6.3.2.1"/>
    </reaction>
</comment>
<comment type="pathway">
    <text evidence="1">Cofactor biosynthesis; (R)-pantothenate biosynthesis; (R)-pantothenate from (R)-pantoate and beta-alanine: step 1/1.</text>
</comment>
<comment type="subunit">
    <text evidence="1">Homodimer.</text>
</comment>
<comment type="subcellular location">
    <subcellularLocation>
        <location evidence="1">Cytoplasm</location>
    </subcellularLocation>
</comment>
<comment type="miscellaneous">
    <text evidence="1">The reaction proceeds by a bi uni uni bi ping pong mechanism.</text>
</comment>
<comment type="similarity">
    <text evidence="1">Belongs to the pantothenate synthetase family.</text>
</comment>
<gene>
    <name evidence="1" type="primary">panC</name>
    <name type="ordered locus">ACIAD3060</name>
</gene>
<reference key="1">
    <citation type="journal article" date="2004" name="Nucleic Acids Res.">
        <title>Unique features revealed by the genome sequence of Acinetobacter sp. ADP1, a versatile and naturally transformation competent bacterium.</title>
        <authorList>
            <person name="Barbe V."/>
            <person name="Vallenet D."/>
            <person name="Fonknechten N."/>
            <person name="Kreimeyer A."/>
            <person name="Oztas S."/>
            <person name="Labarre L."/>
            <person name="Cruveiller S."/>
            <person name="Robert C."/>
            <person name="Duprat S."/>
            <person name="Wincker P."/>
            <person name="Ornston L.N."/>
            <person name="Weissenbach J."/>
            <person name="Marliere P."/>
            <person name="Cohen G.N."/>
            <person name="Medigue C."/>
        </authorList>
    </citation>
    <scope>NUCLEOTIDE SEQUENCE [LARGE SCALE GENOMIC DNA]</scope>
    <source>
        <strain>ATCC 33305 / BD413 / ADP1</strain>
    </source>
</reference>
<evidence type="ECO:0000255" key="1">
    <source>
        <dbReference type="HAMAP-Rule" id="MF_00158"/>
    </source>
</evidence>
<accession>Q6F855</accession>
<proteinExistence type="inferred from homology"/>
<keyword id="KW-0067">ATP-binding</keyword>
<keyword id="KW-0963">Cytoplasm</keyword>
<keyword id="KW-0436">Ligase</keyword>
<keyword id="KW-0547">Nucleotide-binding</keyword>
<keyword id="KW-0566">Pantothenate biosynthesis</keyword>
<organism>
    <name type="scientific">Acinetobacter baylyi (strain ATCC 33305 / BD413 / ADP1)</name>
    <dbReference type="NCBI Taxonomy" id="62977"/>
    <lineage>
        <taxon>Bacteria</taxon>
        <taxon>Pseudomonadati</taxon>
        <taxon>Pseudomonadota</taxon>
        <taxon>Gammaproteobacteria</taxon>
        <taxon>Moraxellales</taxon>
        <taxon>Moraxellaceae</taxon>
        <taxon>Acinetobacter</taxon>
    </lineage>
</organism>
<feature type="chain" id="PRO_0000128195" description="Pantothenate synthetase">
    <location>
        <begin position="1"/>
        <end position="281"/>
    </location>
</feature>
<feature type="active site" description="Proton donor" evidence="1">
    <location>
        <position position="37"/>
    </location>
</feature>
<feature type="binding site" evidence="1">
    <location>
        <begin position="30"/>
        <end position="37"/>
    </location>
    <ligand>
        <name>ATP</name>
        <dbReference type="ChEBI" id="CHEBI:30616"/>
    </ligand>
</feature>
<feature type="binding site" evidence="1">
    <location>
        <position position="61"/>
    </location>
    <ligand>
        <name>(R)-pantoate</name>
        <dbReference type="ChEBI" id="CHEBI:15980"/>
    </ligand>
</feature>
<feature type="binding site" evidence="1">
    <location>
        <position position="61"/>
    </location>
    <ligand>
        <name>beta-alanine</name>
        <dbReference type="ChEBI" id="CHEBI:57966"/>
    </ligand>
</feature>
<feature type="binding site" evidence="1">
    <location>
        <begin position="148"/>
        <end position="151"/>
    </location>
    <ligand>
        <name>ATP</name>
        <dbReference type="ChEBI" id="CHEBI:30616"/>
    </ligand>
</feature>
<feature type="binding site" evidence="1">
    <location>
        <position position="154"/>
    </location>
    <ligand>
        <name>(R)-pantoate</name>
        <dbReference type="ChEBI" id="CHEBI:15980"/>
    </ligand>
</feature>
<feature type="binding site" evidence="1">
    <location>
        <position position="177"/>
    </location>
    <ligand>
        <name>ATP</name>
        <dbReference type="ChEBI" id="CHEBI:30616"/>
    </ligand>
</feature>
<feature type="binding site" evidence="1">
    <location>
        <begin position="185"/>
        <end position="188"/>
    </location>
    <ligand>
        <name>ATP</name>
        <dbReference type="ChEBI" id="CHEBI:30616"/>
    </ligand>
</feature>
<dbReference type="EC" id="6.3.2.1" evidence="1"/>
<dbReference type="EMBL" id="CR543861">
    <property type="protein sequence ID" value="CAG69760.1"/>
    <property type="molecule type" value="Genomic_DNA"/>
</dbReference>
<dbReference type="RefSeq" id="WP_004924494.1">
    <property type="nucleotide sequence ID" value="NC_005966.1"/>
</dbReference>
<dbReference type="SMR" id="Q6F855"/>
<dbReference type="STRING" id="202950.GCA_001485005_02720"/>
<dbReference type="GeneID" id="45235282"/>
<dbReference type="KEGG" id="aci:ACIAD3060"/>
<dbReference type="eggNOG" id="COG0414">
    <property type="taxonomic scope" value="Bacteria"/>
</dbReference>
<dbReference type="HOGENOM" id="CLU_047148_0_0_6"/>
<dbReference type="OrthoDB" id="9773087at2"/>
<dbReference type="BioCyc" id="ASP62977:ACIAD_RS13835-MONOMER"/>
<dbReference type="UniPathway" id="UPA00028">
    <property type="reaction ID" value="UER00005"/>
</dbReference>
<dbReference type="Proteomes" id="UP000000430">
    <property type="component" value="Chromosome"/>
</dbReference>
<dbReference type="GO" id="GO:0005829">
    <property type="term" value="C:cytosol"/>
    <property type="evidence" value="ECO:0007669"/>
    <property type="project" value="TreeGrafter"/>
</dbReference>
<dbReference type="GO" id="GO:0005524">
    <property type="term" value="F:ATP binding"/>
    <property type="evidence" value="ECO:0007669"/>
    <property type="project" value="UniProtKB-KW"/>
</dbReference>
<dbReference type="GO" id="GO:0004592">
    <property type="term" value="F:pantoate-beta-alanine ligase activity"/>
    <property type="evidence" value="ECO:0007669"/>
    <property type="project" value="UniProtKB-UniRule"/>
</dbReference>
<dbReference type="GO" id="GO:0015940">
    <property type="term" value="P:pantothenate biosynthetic process"/>
    <property type="evidence" value="ECO:0007669"/>
    <property type="project" value="UniProtKB-UniRule"/>
</dbReference>
<dbReference type="CDD" id="cd00560">
    <property type="entry name" value="PanC"/>
    <property type="match status" value="1"/>
</dbReference>
<dbReference type="FunFam" id="3.40.50.620:FF:000013">
    <property type="entry name" value="Pantothenate synthetase"/>
    <property type="match status" value="1"/>
</dbReference>
<dbReference type="Gene3D" id="3.40.50.620">
    <property type="entry name" value="HUPs"/>
    <property type="match status" value="1"/>
</dbReference>
<dbReference type="Gene3D" id="3.30.1300.10">
    <property type="entry name" value="Pantoate-beta-alanine ligase, C-terminal domain"/>
    <property type="match status" value="1"/>
</dbReference>
<dbReference type="HAMAP" id="MF_00158">
    <property type="entry name" value="PanC"/>
    <property type="match status" value="1"/>
</dbReference>
<dbReference type="InterPro" id="IPR004821">
    <property type="entry name" value="Cyt_trans-like"/>
</dbReference>
<dbReference type="InterPro" id="IPR003721">
    <property type="entry name" value="Pantoate_ligase"/>
</dbReference>
<dbReference type="InterPro" id="IPR042176">
    <property type="entry name" value="Pantoate_ligase_C"/>
</dbReference>
<dbReference type="InterPro" id="IPR014729">
    <property type="entry name" value="Rossmann-like_a/b/a_fold"/>
</dbReference>
<dbReference type="NCBIfam" id="TIGR00125">
    <property type="entry name" value="cyt_tran_rel"/>
    <property type="match status" value="1"/>
</dbReference>
<dbReference type="NCBIfam" id="TIGR00018">
    <property type="entry name" value="panC"/>
    <property type="match status" value="1"/>
</dbReference>
<dbReference type="PANTHER" id="PTHR21299">
    <property type="entry name" value="CYTIDYLATE KINASE/PANTOATE-BETA-ALANINE LIGASE"/>
    <property type="match status" value="1"/>
</dbReference>
<dbReference type="PANTHER" id="PTHR21299:SF1">
    <property type="entry name" value="PANTOATE--BETA-ALANINE LIGASE"/>
    <property type="match status" value="1"/>
</dbReference>
<dbReference type="Pfam" id="PF02569">
    <property type="entry name" value="Pantoate_ligase"/>
    <property type="match status" value="1"/>
</dbReference>
<dbReference type="SUPFAM" id="SSF52374">
    <property type="entry name" value="Nucleotidylyl transferase"/>
    <property type="match status" value="1"/>
</dbReference>
<sequence>MKTETTIQGLTASLNPARTTRKIIGFVPTMGNLHQGHLNLVREAKKLCDIVVVSIFVNPIQFGEGEDFENYPRTLEQDSHLLADVGCDIIFAPSVEQMYGKHPRLTNISVADITDDLCGQSRPGHFDGVAVVVTKLFNIVQPNVAFFGQKDYQQLAVIRQLVQDLNLPIDIIGVPIARDHDGLALSSRNGYLSEAERQIAPTIYQSLKLAEQQLHQGVELVDVLDELKFRLTAAGFVVDYVEARQPNLQPIAQFDRDLVLFVAAKLGKTRLIDNLQVKLKA</sequence>
<protein>
    <recommendedName>
        <fullName evidence="1">Pantothenate synthetase</fullName>
        <shortName evidence="1">PS</shortName>
        <ecNumber evidence="1">6.3.2.1</ecNumber>
    </recommendedName>
    <alternativeName>
        <fullName evidence="1">Pantoate--beta-alanine ligase</fullName>
    </alternativeName>
    <alternativeName>
        <fullName evidence="1">Pantoate-activating enzyme</fullName>
    </alternativeName>
</protein>
<name>PANC_ACIAD</name>